<organism>
    <name type="scientific">Salmonella paratyphi A (strain AKU_12601)</name>
    <dbReference type="NCBI Taxonomy" id="554290"/>
    <lineage>
        <taxon>Bacteria</taxon>
        <taxon>Pseudomonadati</taxon>
        <taxon>Pseudomonadota</taxon>
        <taxon>Gammaproteobacteria</taxon>
        <taxon>Enterobacterales</taxon>
        <taxon>Enterobacteriaceae</taxon>
        <taxon>Salmonella</taxon>
    </lineage>
</organism>
<gene>
    <name evidence="1" type="primary">murA</name>
    <name type="ordered locus">SSPA2962</name>
</gene>
<sequence>MDKFRVQGPTTLQGEVTISGAKNAALPILFAALLAEEPVEIQNVPKLKDVDTSMKLLSQLGAKVERNGSVHIDASQVNVFCAPYDLVKTMRASIWALGPLVARFGQGQVSLPGGCTIGARPVDLHITGLEQLGATIKLEEGYVKASVEGRLKGAHIVMDKVSVGATVTIMCAATLAEGTTIIENAAREPEIVDTANFLVTLGAKIAGQGTDRITIEGVERLGGGVYRVLPDRIETGTFLVAAAISRGKILCRNAQPDTLDAVLAKLRDAGADIEVGEDWISLDMHGKRPKAVNVRTAPHPAFPTDMQAQFTLLNLVAEGTGFITETVFENRFMHVPELSRMGARAEIESNTVICHGVETLSGAQVMATDLRASASLVLAGCIAEGTTIVDRIYHIDRGYERIEDKLRALGANIERVKGE</sequence>
<reference key="1">
    <citation type="journal article" date="2009" name="BMC Genomics">
        <title>Pseudogene accumulation in the evolutionary histories of Salmonella enterica serovars Paratyphi A and Typhi.</title>
        <authorList>
            <person name="Holt K.E."/>
            <person name="Thomson N.R."/>
            <person name="Wain J."/>
            <person name="Langridge G.C."/>
            <person name="Hasan R."/>
            <person name="Bhutta Z.A."/>
            <person name="Quail M.A."/>
            <person name="Norbertczak H."/>
            <person name="Walker D."/>
            <person name="Simmonds M."/>
            <person name="White B."/>
            <person name="Bason N."/>
            <person name="Mungall K."/>
            <person name="Dougan G."/>
            <person name="Parkhill J."/>
        </authorList>
    </citation>
    <scope>NUCLEOTIDE SEQUENCE [LARGE SCALE GENOMIC DNA]</scope>
    <source>
        <strain>AKU_12601</strain>
    </source>
</reference>
<proteinExistence type="inferred from homology"/>
<feature type="chain" id="PRO_1000094722" description="UDP-N-acetylglucosamine 1-carboxyvinyltransferase">
    <location>
        <begin position="1"/>
        <end position="419"/>
    </location>
</feature>
<feature type="active site" description="Proton donor" evidence="1">
    <location>
        <position position="115"/>
    </location>
</feature>
<feature type="binding site" evidence="1">
    <location>
        <begin position="22"/>
        <end position="23"/>
    </location>
    <ligand>
        <name>phosphoenolpyruvate</name>
        <dbReference type="ChEBI" id="CHEBI:58702"/>
    </ligand>
</feature>
<feature type="binding site" evidence="1">
    <location>
        <position position="91"/>
    </location>
    <ligand>
        <name>UDP-N-acetyl-alpha-D-glucosamine</name>
        <dbReference type="ChEBI" id="CHEBI:57705"/>
    </ligand>
</feature>
<feature type="binding site" evidence="1">
    <location>
        <begin position="120"/>
        <end position="124"/>
    </location>
    <ligand>
        <name>UDP-N-acetyl-alpha-D-glucosamine</name>
        <dbReference type="ChEBI" id="CHEBI:57705"/>
    </ligand>
</feature>
<feature type="binding site" evidence="1">
    <location>
        <begin position="160"/>
        <end position="163"/>
    </location>
    <ligand>
        <name>UDP-N-acetyl-alpha-D-glucosamine</name>
        <dbReference type="ChEBI" id="CHEBI:57705"/>
    </ligand>
</feature>
<feature type="binding site" evidence="1">
    <location>
        <position position="305"/>
    </location>
    <ligand>
        <name>UDP-N-acetyl-alpha-D-glucosamine</name>
        <dbReference type="ChEBI" id="CHEBI:57705"/>
    </ligand>
</feature>
<feature type="binding site" evidence="1">
    <location>
        <position position="327"/>
    </location>
    <ligand>
        <name>UDP-N-acetyl-alpha-D-glucosamine</name>
        <dbReference type="ChEBI" id="CHEBI:57705"/>
    </ligand>
</feature>
<feature type="modified residue" description="2-(S-cysteinyl)pyruvic acid O-phosphothioketal" evidence="1">
    <location>
        <position position="115"/>
    </location>
</feature>
<name>MURA_SALPK</name>
<keyword id="KW-0131">Cell cycle</keyword>
<keyword id="KW-0132">Cell division</keyword>
<keyword id="KW-0133">Cell shape</keyword>
<keyword id="KW-0961">Cell wall biogenesis/degradation</keyword>
<keyword id="KW-0963">Cytoplasm</keyword>
<keyword id="KW-0573">Peptidoglycan synthesis</keyword>
<keyword id="KW-0670">Pyruvate</keyword>
<keyword id="KW-0808">Transferase</keyword>
<accession>B5BGL3</accession>
<protein>
    <recommendedName>
        <fullName evidence="1">UDP-N-acetylglucosamine 1-carboxyvinyltransferase</fullName>
        <ecNumber evidence="1">2.5.1.7</ecNumber>
    </recommendedName>
    <alternativeName>
        <fullName evidence="1">Enoylpyruvate transferase</fullName>
    </alternativeName>
    <alternativeName>
        <fullName evidence="1">UDP-N-acetylglucosamine enolpyruvyl transferase</fullName>
        <shortName evidence="1">EPT</shortName>
    </alternativeName>
</protein>
<dbReference type="EC" id="2.5.1.7" evidence="1"/>
<dbReference type="EMBL" id="FM200053">
    <property type="protein sequence ID" value="CAR61211.1"/>
    <property type="molecule type" value="Genomic_DNA"/>
</dbReference>
<dbReference type="RefSeq" id="WP_000357288.1">
    <property type="nucleotide sequence ID" value="NC_011147.1"/>
</dbReference>
<dbReference type="SMR" id="B5BGL3"/>
<dbReference type="KEGG" id="sek:SSPA2962"/>
<dbReference type="HOGENOM" id="CLU_027387_0_0_6"/>
<dbReference type="UniPathway" id="UPA00219"/>
<dbReference type="Proteomes" id="UP000001869">
    <property type="component" value="Chromosome"/>
</dbReference>
<dbReference type="GO" id="GO:0005737">
    <property type="term" value="C:cytoplasm"/>
    <property type="evidence" value="ECO:0007669"/>
    <property type="project" value="UniProtKB-SubCell"/>
</dbReference>
<dbReference type="GO" id="GO:0008760">
    <property type="term" value="F:UDP-N-acetylglucosamine 1-carboxyvinyltransferase activity"/>
    <property type="evidence" value="ECO:0007669"/>
    <property type="project" value="UniProtKB-UniRule"/>
</dbReference>
<dbReference type="GO" id="GO:0051301">
    <property type="term" value="P:cell division"/>
    <property type="evidence" value="ECO:0007669"/>
    <property type="project" value="UniProtKB-KW"/>
</dbReference>
<dbReference type="GO" id="GO:0071555">
    <property type="term" value="P:cell wall organization"/>
    <property type="evidence" value="ECO:0007669"/>
    <property type="project" value="UniProtKB-KW"/>
</dbReference>
<dbReference type="GO" id="GO:0009252">
    <property type="term" value="P:peptidoglycan biosynthetic process"/>
    <property type="evidence" value="ECO:0007669"/>
    <property type="project" value="UniProtKB-UniRule"/>
</dbReference>
<dbReference type="GO" id="GO:0008360">
    <property type="term" value="P:regulation of cell shape"/>
    <property type="evidence" value="ECO:0007669"/>
    <property type="project" value="UniProtKB-KW"/>
</dbReference>
<dbReference type="GO" id="GO:0019277">
    <property type="term" value="P:UDP-N-acetylgalactosamine biosynthetic process"/>
    <property type="evidence" value="ECO:0007669"/>
    <property type="project" value="InterPro"/>
</dbReference>
<dbReference type="CDD" id="cd01555">
    <property type="entry name" value="UdpNAET"/>
    <property type="match status" value="1"/>
</dbReference>
<dbReference type="FunFam" id="3.65.10.10:FF:000002">
    <property type="entry name" value="UDP-N-acetylglucosamine 1-carboxyvinyltransferase"/>
    <property type="match status" value="1"/>
</dbReference>
<dbReference type="Gene3D" id="3.65.10.10">
    <property type="entry name" value="Enolpyruvate transferase domain"/>
    <property type="match status" value="2"/>
</dbReference>
<dbReference type="HAMAP" id="MF_00111">
    <property type="entry name" value="MurA"/>
    <property type="match status" value="1"/>
</dbReference>
<dbReference type="InterPro" id="IPR001986">
    <property type="entry name" value="Enolpyruvate_Tfrase_dom"/>
</dbReference>
<dbReference type="InterPro" id="IPR036968">
    <property type="entry name" value="Enolpyruvate_Tfrase_sf"/>
</dbReference>
<dbReference type="InterPro" id="IPR050068">
    <property type="entry name" value="MurA_subfamily"/>
</dbReference>
<dbReference type="InterPro" id="IPR013792">
    <property type="entry name" value="RNA3'P_cycl/enolpyr_Trfase_a/b"/>
</dbReference>
<dbReference type="InterPro" id="IPR005750">
    <property type="entry name" value="UDP_GlcNAc_COvinyl_MurA"/>
</dbReference>
<dbReference type="NCBIfam" id="TIGR01072">
    <property type="entry name" value="murA"/>
    <property type="match status" value="1"/>
</dbReference>
<dbReference type="NCBIfam" id="NF006873">
    <property type="entry name" value="PRK09369.1"/>
    <property type="match status" value="1"/>
</dbReference>
<dbReference type="PANTHER" id="PTHR43783">
    <property type="entry name" value="UDP-N-ACETYLGLUCOSAMINE 1-CARBOXYVINYLTRANSFERASE"/>
    <property type="match status" value="1"/>
</dbReference>
<dbReference type="PANTHER" id="PTHR43783:SF1">
    <property type="entry name" value="UDP-N-ACETYLGLUCOSAMINE 1-CARBOXYVINYLTRANSFERASE"/>
    <property type="match status" value="1"/>
</dbReference>
<dbReference type="Pfam" id="PF00275">
    <property type="entry name" value="EPSP_synthase"/>
    <property type="match status" value="1"/>
</dbReference>
<dbReference type="SUPFAM" id="SSF55205">
    <property type="entry name" value="EPT/RTPC-like"/>
    <property type="match status" value="1"/>
</dbReference>
<evidence type="ECO:0000255" key="1">
    <source>
        <dbReference type="HAMAP-Rule" id="MF_00111"/>
    </source>
</evidence>
<comment type="function">
    <text evidence="1">Cell wall formation. Adds enolpyruvyl to UDP-N-acetylglucosamine.</text>
</comment>
<comment type="catalytic activity">
    <reaction evidence="1">
        <text>phosphoenolpyruvate + UDP-N-acetyl-alpha-D-glucosamine = UDP-N-acetyl-3-O-(1-carboxyvinyl)-alpha-D-glucosamine + phosphate</text>
        <dbReference type="Rhea" id="RHEA:18681"/>
        <dbReference type="ChEBI" id="CHEBI:43474"/>
        <dbReference type="ChEBI" id="CHEBI:57705"/>
        <dbReference type="ChEBI" id="CHEBI:58702"/>
        <dbReference type="ChEBI" id="CHEBI:68483"/>
        <dbReference type="EC" id="2.5.1.7"/>
    </reaction>
</comment>
<comment type="pathway">
    <text evidence="1">Cell wall biogenesis; peptidoglycan biosynthesis.</text>
</comment>
<comment type="subcellular location">
    <subcellularLocation>
        <location evidence="1">Cytoplasm</location>
    </subcellularLocation>
</comment>
<comment type="similarity">
    <text evidence="1">Belongs to the EPSP synthase family. MurA subfamily.</text>
</comment>